<proteinExistence type="evidence at protein level"/>
<evidence type="ECO:0000255" key="1">
    <source>
        <dbReference type="HAMAP-Rule" id="MF_00433"/>
    </source>
</evidence>
<evidence type="ECO:0000269" key="2">
    <source>
    </source>
</evidence>
<evidence type="ECO:0000305" key="3">
    <source>
    </source>
</evidence>
<evidence type="ECO:0007829" key="4">
    <source>
        <dbReference type="PDB" id="2E74"/>
    </source>
</evidence>
<evidence type="ECO:0007829" key="5">
    <source>
        <dbReference type="PDB" id="4I7Z"/>
    </source>
</evidence>
<name>PETL_MASLA</name>
<sequence length="32" mass="3502">MILGAVFYIVFIALFFGIAVGIIFAIKSIKLI</sequence>
<accession>P83795</accession>
<reference key="1">
    <citation type="journal article" date="2003" name="Science">
        <title>Structure of the cytochrome b6f complex of oxygenic photosynthesis: tuning the cavity.</title>
        <authorList>
            <person name="Kurisu G."/>
            <person name="Zhang H."/>
            <person name="Smith J.L."/>
            <person name="Cramer W.A."/>
        </authorList>
    </citation>
    <scope>X-RAY CRYSTALLOGRAPHY (3.0 ANGSTROMS) IN CYTOCHROME B6-F COMPLEX</scope>
    <scope>FUNCTION</scope>
    <scope>SUBUNIT</scope>
    <scope>SUBCELLULAR LOCATION</scope>
</reference>
<keyword id="KW-0002">3D-structure</keyword>
<keyword id="KW-0249">Electron transport</keyword>
<keyword id="KW-0472">Membrane</keyword>
<keyword id="KW-0602">Photosynthesis</keyword>
<keyword id="KW-0793">Thylakoid</keyword>
<keyword id="KW-0812">Transmembrane</keyword>
<keyword id="KW-1133">Transmembrane helix</keyword>
<keyword id="KW-0813">Transport</keyword>
<organism>
    <name type="scientific">Mastigocladus laminosus</name>
    <name type="common">Fischerella sp.</name>
    <dbReference type="NCBI Taxonomy" id="83541"/>
    <lineage>
        <taxon>Bacteria</taxon>
        <taxon>Bacillati</taxon>
        <taxon>Cyanobacteriota</taxon>
        <taxon>Cyanophyceae</taxon>
        <taxon>Nostocales</taxon>
        <taxon>Hapalosiphonaceae</taxon>
        <taxon>Mastigocladus</taxon>
    </lineage>
</organism>
<feature type="chain" id="PRO_0000220486" description="Cytochrome b6-f complex subunit 6">
    <location>
        <begin position="1"/>
        <end position="32"/>
    </location>
</feature>
<feature type="transmembrane region" description="Helical" evidence="1 3">
    <location>
        <begin position="6"/>
        <end position="26"/>
    </location>
</feature>
<feature type="helix" evidence="5">
    <location>
        <begin position="3"/>
        <end position="27"/>
    </location>
</feature>
<feature type="turn" evidence="4">
    <location>
        <begin position="28"/>
        <end position="30"/>
    </location>
</feature>
<comment type="function">
    <text evidence="3">Component of the cytochrome b6-f complex, which mediates electron transfer between photosystem II (PSII) and photosystem I (PSI), cyclic electron flow around PSI, and state transitions (PubMed:14526088). PetL is important for photoautotrophic growth as well as for electron transfer efficiency and stability of the cytochrome b6-f complex.</text>
</comment>
<comment type="subunit">
    <text evidence="2">The 4 large subunits of the cytochrome b6-f complex are cytochrome b6, subunit IV (17 kDa polypeptide, PetD), cytochrome f and the Rieske protein, while the 4 small subunits are PetG, PetL, PetM and PetN. The complex functions as a dimer.</text>
</comment>
<comment type="subcellular location">
    <subcellularLocation>
        <location evidence="3">Cellular thylakoid membrane</location>
        <topology evidence="2">Single-pass membrane protein</topology>
    </subcellularLocation>
</comment>
<comment type="similarity">
    <text evidence="1">Belongs to the PetL family.</text>
</comment>
<dbReference type="PDB" id="1VF5">
    <property type="method" value="X-ray"/>
    <property type="resolution" value="3.00 A"/>
    <property type="chains" value="E/R=1-32"/>
</dbReference>
<dbReference type="PDB" id="2D2C">
    <property type="method" value="X-ray"/>
    <property type="resolution" value="3.80 A"/>
    <property type="chains" value="E/R=1-32"/>
</dbReference>
<dbReference type="PDB" id="2E74">
    <property type="method" value="X-ray"/>
    <property type="resolution" value="3.00 A"/>
    <property type="chains" value="E=1-32"/>
</dbReference>
<dbReference type="PDB" id="2E75">
    <property type="method" value="X-ray"/>
    <property type="resolution" value="3.55 A"/>
    <property type="chains" value="E=1-32"/>
</dbReference>
<dbReference type="PDB" id="2E76">
    <property type="method" value="X-ray"/>
    <property type="resolution" value="3.41 A"/>
    <property type="chains" value="E=1-32"/>
</dbReference>
<dbReference type="PDB" id="4H0L">
    <property type="method" value="X-ray"/>
    <property type="resolution" value="3.25 A"/>
    <property type="chains" value="E=1-32"/>
</dbReference>
<dbReference type="PDB" id="4H13">
    <property type="method" value="X-ray"/>
    <property type="resolution" value="3.07 A"/>
    <property type="chains" value="E=1-32"/>
</dbReference>
<dbReference type="PDB" id="4I7Z">
    <property type="method" value="X-ray"/>
    <property type="resolution" value="2.80 A"/>
    <property type="chains" value="E=1-32"/>
</dbReference>
<dbReference type="PDB" id="4PV1">
    <property type="method" value="X-ray"/>
    <property type="resolution" value="3.00 A"/>
    <property type="chains" value="E=1-32"/>
</dbReference>
<dbReference type="PDBsum" id="1VF5"/>
<dbReference type="PDBsum" id="2D2C"/>
<dbReference type="PDBsum" id="2E74"/>
<dbReference type="PDBsum" id="2E75"/>
<dbReference type="PDBsum" id="2E76"/>
<dbReference type="PDBsum" id="4H0L"/>
<dbReference type="PDBsum" id="4H13"/>
<dbReference type="PDBsum" id="4I7Z"/>
<dbReference type="PDBsum" id="4PV1"/>
<dbReference type="SMR" id="P83795"/>
<dbReference type="DrugBank" id="DB08453">
    <property type="generic name" value="2-Nonyl-4-quinolinol 1-oxide"/>
</dbReference>
<dbReference type="DrugBank" id="DB04646">
    <property type="generic name" value="Dibromothymoquinone"/>
</dbReference>
<dbReference type="GO" id="GO:0009512">
    <property type="term" value="C:cytochrome b6f complex"/>
    <property type="evidence" value="ECO:0007669"/>
    <property type="project" value="InterPro"/>
</dbReference>
<dbReference type="GO" id="GO:0031676">
    <property type="term" value="C:plasma membrane-derived thylakoid membrane"/>
    <property type="evidence" value="ECO:0007669"/>
    <property type="project" value="UniProtKB-SubCell"/>
</dbReference>
<dbReference type="GO" id="GO:0045158">
    <property type="term" value="F:electron transporter, transferring electrons within cytochrome b6/f complex of photosystem II activity"/>
    <property type="evidence" value="ECO:0007669"/>
    <property type="project" value="UniProtKB-UniRule"/>
</dbReference>
<dbReference type="GO" id="GO:0015979">
    <property type="term" value="P:photosynthesis"/>
    <property type="evidence" value="ECO:0007669"/>
    <property type="project" value="UniProtKB-KW"/>
</dbReference>
<dbReference type="HAMAP" id="MF_00433">
    <property type="entry name" value="Cytb6_f_PetL"/>
    <property type="match status" value="1"/>
</dbReference>
<dbReference type="InterPro" id="IPR007802">
    <property type="entry name" value="Cyt_b6/f_cplx_su6"/>
</dbReference>
<dbReference type="SUPFAM" id="SSF103436">
    <property type="entry name" value="PetL subunit of the cytochrome b6f complex"/>
    <property type="match status" value="1"/>
</dbReference>
<gene>
    <name evidence="1" type="primary">petL</name>
</gene>
<protein>
    <recommendedName>
        <fullName evidence="1">Cytochrome b6-f complex subunit 6</fullName>
    </recommendedName>
    <alternativeName>
        <fullName evidence="1">Cytochrome b6-f complex subunit PetL</fullName>
    </alternativeName>
    <alternativeName>
        <fullName evidence="1">Cytochrome b6-f complex subunit VI</fullName>
    </alternativeName>
</protein>